<comment type="similarity">
    <text evidence="1">Belongs to the bacterial ribosomal protein bL32 family.</text>
</comment>
<keyword id="KW-1185">Reference proteome</keyword>
<keyword id="KW-0687">Ribonucleoprotein</keyword>
<keyword id="KW-0689">Ribosomal protein</keyword>
<name>RL32_STAEQ</name>
<reference key="1">
    <citation type="journal article" date="2005" name="J. Bacteriol.">
        <title>Insights on evolution of virulence and resistance from the complete genome analysis of an early methicillin-resistant Staphylococcus aureus strain and a biofilm-producing methicillin-resistant Staphylococcus epidermidis strain.</title>
        <authorList>
            <person name="Gill S.R."/>
            <person name="Fouts D.E."/>
            <person name="Archer G.L."/>
            <person name="Mongodin E.F."/>
            <person name="DeBoy R.T."/>
            <person name="Ravel J."/>
            <person name="Paulsen I.T."/>
            <person name="Kolonay J.F."/>
            <person name="Brinkac L.M."/>
            <person name="Beanan M.J."/>
            <person name="Dodson R.J."/>
            <person name="Daugherty S.C."/>
            <person name="Madupu R."/>
            <person name="Angiuoli S.V."/>
            <person name="Durkin A.S."/>
            <person name="Haft D.H."/>
            <person name="Vamathevan J.J."/>
            <person name="Khouri H."/>
            <person name="Utterback T.R."/>
            <person name="Lee C."/>
            <person name="Dimitrov G."/>
            <person name="Jiang L."/>
            <person name="Qin H."/>
            <person name="Weidman J."/>
            <person name="Tran K."/>
            <person name="Kang K.H."/>
            <person name="Hance I.R."/>
            <person name="Nelson K.E."/>
            <person name="Fraser C.M."/>
        </authorList>
    </citation>
    <scope>NUCLEOTIDE SEQUENCE [LARGE SCALE GENOMIC DNA]</scope>
    <source>
        <strain>ATCC 35984 / DSM 28319 / BCRC 17069 / CCUG 31568 / BM 3577 / RP62A</strain>
    </source>
</reference>
<gene>
    <name evidence="1" type="primary">rpmF</name>
    <name type="ordered locus">SERP0718</name>
</gene>
<dbReference type="EMBL" id="CP000029">
    <property type="protein sequence ID" value="AAW54076.1"/>
    <property type="molecule type" value="Genomic_DNA"/>
</dbReference>
<dbReference type="RefSeq" id="WP_001830121.1">
    <property type="nucleotide sequence ID" value="NC_002976.3"/>
</dbReference>
<dbReference type="SMR" id="Q5HQ39"/>
<dbReference type="STRING" id="176279.SERP0718"/>
<dbReference type="GeneID" id="93845503"/>
<dbReference type="KEGG" id="ser:SERP0718"/>
<dbReference type="eggNOG" id="COG0333">
    <property type="taxonomic scope" value="Bacteria"/>
</dbReference>
<dbReference type="HOGENOM" id="CLU_129084_1_3_9"/>
<dbReference type="Proteomes" id="UP000000531">
    <property type="component" value="Chromosome"/>
</dbReference>
<dbReference type="GO" id="GO:0015934">
    <property type="term" value="C:large ribosomal subunit"/>
    <property type="evidence" value="ECO:0007669"/>
    <property type="project" value="InterPro"/>
</dbReference>
<dbReference type="GO" id="GO:0003735">
    <property type="term" value="F:structural constituent of ribosome"/>
    <property type="evidence" value="ECO:0007669"/>
    <property type="project" value="InterPro"/>
</dbReference>
<dbReference type="GO" id="GO:0006412">
    <property type="term" value="P:translation"/>
    <property type="evidence" value="ECO:0007669"/>
    <property type="project" value="UniProtKB-UniRule"/>
</dbReference>
<dbReference type="Gene3D" id="1.20.5.640">
    <property type="entry name" value="Single helix bin"/>
    <property type="match status" value="1"/>
</dbReference>
<dbReference type="HAMAP" id="MF_00340">
    <property type="entry name" value="Ribosomal_bL32"/>
    <property type="match status" value="1"/>
</dbReference>
<dbReference type="InterPro" id="IPR002677">
    <property type="entry name" value="Ribosomal_bL32"/>
</dbReference>
<dbReference type="InterPro" id="IPR044957">
    <property type="entry name" value="Ribosomal_bL32_bact"/>
</dbReference>
<dbReference type="InterPro" id="IPR011332">
    <property type="entry name" value="Ribosomal_zn-bd"/>
</dbReference>
<dbReference type="NCBIfam" id="TIGR01031">
    <property type="entry name" value="rpmF_bact"/>
    <property type="match status" value="1"/>
</dbReference>
<dbReference type="PANTHER" id="PTHR35534">
    <property type="entry name" value="50S RIBOSOMAL PROTEIN L32"/>
    <property type="match status" value="1"/>
</dbReference>
<dbReference type="PANTHER" id="PTHR35534:SF2">
    <property type="entry name" value="LARGE RIBOSOMAL SUBUNIT PROTEIN BL32"/>
    <property type="match status" value="1"/>
</dbReference>
<dbReference type="Pfam" id="PF01783">
    <property type="entry name" value="Ribosomal_L32p"/>
    <property type="match status" value="1"/>
</dbReference>
<dbReference type="SUPFAM" id="SSF57829">
    <property type="entry name" value="Zn-binding ribosomal proteins"/>
    <property type="match status" value="1"/>
</dbReference>
<feature type="chain" id="PRO_0000172409" description="Large ribosomal subunit protein bL32">
    <location>
        <begin position="1"/>
        <end position="57"/>
    </location>
</feature>
<evidence type="ECO:0000255" key="1">
    <source>
        <dbReference type="HAMAP-Rule" id="MF_00340"/>
    </source>
</evidence>
<evidence type="ECO:0000305" key="2"/>
<organism>
    <name type="scientific">Staphylococcus epidermidis (strain ATCC 35984 / DSM 28319 / BCRC 17069 / CCUG 31568 / BM 3577 / RP62A)</name>
    <dbReference type="NCBI Taxonomy" id="176279"/>
    <lineage>
        <taxon>Bacteria</taxon>
        <taxon>Bacillati</taxon>
        <taxon>Bacillota</taxon>
        <taxon>Bacilli</taxon>
        <taxon>Bacillales</taxon>
        <taxon>Staphylococcaceae</taxon>
        <taxon>Staphylococcus</taxon>
    </lineage>
</organism>
<proteinExistence type="inferred from homology"/>
<accession>Q5HQ39</accession>
<sequence>MAVPKRRTSKTRKNKRRTHFKISVPGMTECPNCGEYKLSHRVCKNCGSYNGEEVVSK</sequence>
<protein>
    <recommendedName>
        <fullName evidence="1">Large ribosomal subunit protein bL32</fullName>
    </recommendedName>
    <alternativeName>
        <fullName evidence="2">50S ribosomal protein L32</fullName>
    </alternativeName>
</protein>